<sequence>MSRIVLAEAYRTPIGVFGGVFKDIPAYELGATVIRQILEHSQIDPNEINEVILGNVLQAGQGQNPARIAAIHGGVPEAVPSFTVNKVCGSGLKAIQLAYQSIVAGDNEIVIAGGMESMSQSPMLLKNSRFGFKMGNQTLEDSMIADGLTDKFNDYHMGITAENLVEQYQISRKEQDQFAFDSQQKASRAQQAGVFDAEIVPVEVPQRKGDPLIISQDEGIRPQTTIDKLAQLRPAFKKDGSVTAGNASGINDGAAAMLVMTEDKAKALGLQPIAVLDSFGASGVAPSIMGIGPVEAIHKALKRSNKVINDVDIFELNEAFAAQSIAVNRELQLPQDKVNVNGGAIALGHPIGASGARTLVSLLHQLSDAKPTGVASLCIGGGQGIATVVSKYEV</sequence>
<name>THLA_STAES</name>
<gene>
    <name type="ordered locus">SE_2384</name>
</gene>
<evidence type="ECO:0000250" key="1"/>
<evidence type="ECO:0000255" key="2">
    <source>
        <dbReference type="PROSITE-ProRule" id="PRU10020"/>
    </source>
</evidence>
<evidence type="ECO:0000305" key="3"/>
<dbReference type="EC" id="2.3.1.9"/>
<dbReference type="EMBL" id="AE015929">
    <property type="protein sequence ID" value="AAO06027.1"/>
    <property type="molecule type" value="Genomic_DNA"/>
</dbReference>
<dbReference type="RefSeq" id="NP_765939.1">
    <property type="nucleotide sequence ID" value="NC_004461.1"/>
</dbReference>
<dbReference type="RefSeq" id="WP_001831350.1">
    <property type="nucleotide sequence ID" value="NZ_WBME01000004.1"/>
</dbReference>
<dbReference type="SMR" id="Q8CQN7"/>
<dbReference type="KEGG" id="sep:SE_2384"/>
<dbReference type="PATRIC" id="fig|176280.10.peg.2323"/>
<dbReference type="eggNOG" id="COG0183">
    <property type="taxonomic scope" value="Bacteria"/>
</dbReference>
<dbReference type="HOGENOM" id="CLU_031026_0_0_9"/>
<dbReference type="OrthoDB" id="9764892at2"/>
<dbReference type="Proteomes" id="UP000001411">
    <property type="component" value="Chromosome"/>
</dbReference>
<dbReference type="GO" id="GO:0005737">
    <property type="term" value="C:cytoplasm"/>
    <property type="evidence" value="ECO:0007669"/>
    <property type="project" value="UniProtKB-SubCell"/>
</dbReference>
<dbReference type="GO" id="GO:0003985">
    <property type="term" value="F:acetyl-CoA C-acetyltransferase activity"/>
    <property type="evidence" value="ECO:0007669"/>
    <property type="project" value="UniProtKB-EC"/>
</dbReference>
<dbReference type="CDD" id="cd00751">
    <property type="entry name" value="thiolase"/>
    <property type="match status" value="1"/>
</dbReference>
<dbReference type="FunFam" id="3.40.47.10:FF:000010">
    <property type="entry name" value="Acetyl-CoA acetyltransferase (Thiolase)"/>
    <property type="match status" value="1"/>
</dbReference>
<dbReference type="Gene3D" id="3.40.47.10">
    <property type="match status" value="2"/>
</dbReference>
<dbReference type="InterPro" id="IPR002155">
    <property type="entry name" value="Thiolase"/>
</dbReference>
<dbReference type="InterPro" id="IPR016039">
    <property type="entry name" value="Thiolase-like"/>
</dbReference>
<dbReference type="InterPro" id="IPR020615">
    <property type="entry name" value="Thiolase_acyl_enz_int_AS"/>
</dbReference>
<dbReference type="InterPro" id="IPR020610">
    <property type="entry name" value="Thiolase_AS"/>
</dbReference>
<dbReference type="InterPro" id="IPR020617">
    <property type="entry name" value="Thiolase_C"/>
</dbReference>
<dbReference type="InterPro" id="IPR020613">
    <property type="entry name" value="Thiolase_CS"/>
</dbReference>
<dbReference type="InterPro" id="IPR020616">
    <property type="entry name" value="Thiolase_N"/>
</dbReference>
<dbReference type="NCBIfam" id="TIGR01930">
    <property type="entry name" value="AcCoA-C-Actrans"/>
    <property type="match status" value="1"/>
</dbReference>
<dbReference type="PANTHER" id="PTHR18919:SF107">
    <property type="entry name" value="ACETYL-COA ACETYLTRANSFERASE, CYTOSOLIC"/>
    <property type="match status" value="1"/>
</dbReference>
<dbReference type="PANTHER" id="PTHR18919">
    <property type="entry name" value="ACETYL-COA C-ACYLTRANSFERASE"/>
    <property type="match status" value="1"/>
</dbReference>
<dbReference type="Pfam" id="PF02803">
    <property type="entry name" value="Thiolase_C"/>
    <property type="match status" value="1"/>
</dbReference>
<dbReference type="Pfam" id="PF00108">
    <property type="entry name" value="Thiolase_N"/>
    <property type="match status" value="1"/>
</dbReference>
<dbReference type="PIRSF" id="PIRSF000429">
    <property type="entry name" value="Ac-CoA_Ac_transf"/>
    <property type="match status" value="1"/>
</dbReference>
<dbReference type="SUPFAM" id="SSF53901">
    <property type="entry name" value="Thiolase-like"/>
    <property type="match status" value="2"/>
</dbReference>
<dbReference type="PROSITE" id="PS00098">
    <property type="entry name" value="THIOLASE_1"/>
    <property type="match status" value="1"/>
</dbReference>
<dbReference type="PROSITE" id="PS00737">
    <property type="entry name" value="THIOLASE_2"/>
    <property type="match status" value="1"/>
</dbReference>
<dbReference type="PROSITE" id="PS00099">
    <property type="entry name" value="THIOLASE_3"/>
    <property type="match status" value="1"/>
</dbReference>
<reference key="1">
    <citation type="journal article" date="2003" name="Mol. Microbiol.">
        <title>Genome-based analysis of virulence genes in a non-biofilm-forming Staphylococcus epidermidis strain (ATCC 12228).</title>
        <authorList>
            <person name="Zhang Y.-Q."/>
            <person name="Ren S.-X."/>
            <person name="Li H.-L."/>
            <person name="Wang Y.-X."/>
            <person name="Fu G."/>
            <person name="Yang J."/>
            <person name="Qin Z.-Q."/>
            <person name="Miao Y.-G."/>
            <person name="Wang W.-Y."/>
            <person name="Chen R.-S."/>
            <person name="Shen Y."/>
            <person name="Chen Z."/>
            <person name="Yuan Z.-H."/>
            <person name="Zhao G.-P."/>
            <person name="Qu D."/>
            <person name="Danchin A."/>
            <person name="Wen Y.-M."/>
        </authorList>
    </citation>
    <scope>NUCLEOTIDE SEQUENCE [LARGE SCALE GENOMIC DNA]</scope>
    <source>
        <strain>ATCC 12228 / FDA PCI 1200</strain>
    </source>
</reference>
<protein>
    <recommendedName>
        <fullName>Probable acetyl-CoA acyltransferase</fullName>
        <ecNumber>2.3.1.9</ecNumber>
    </recommendedName>
    <alternativeName>
        <fullName>Acetoacetyl-CoA thiolase</fullName>
    </alternativeName>
</protein>
<organism>
    <name type="scientific">Staphylococcus epidermidis (strain ATCC 12228 / FDA PCI 1200)</name>
    <dbReference type="NCBI Taxonomy" id="176280"/>
    <lineage>
        <taxon>Bacteria</taxon>
        <taxon>Bacillati</taxon>
        <taxon>Bacillota</taxon>
        <taxon>Bacilli</taxon>
        <taxon>Bacillales</taxon>
        <taxon>Staphylococcaceae</taxon>
        <taxon>Staphylococcus</taxon>
    </lineage>
</organism>
<keyword id="KW-0012">Acyltransferase</keyword>
<keyword id="KW-0963">Cytoplasm</keyword>
<keyword id="KW-0808">Transferase</keyword>
<proteinExistence type="inferred from homology"/>
<feature type="chain" id="PRO_0000270510" description="Probable acetyl-CoA acyltransferase">
    <location>
        <begin position="1"/>
        <end position="394"/>
    </location>
</feature>
<feature type="active site" description="Acyl-thioester intermediate" evidence="1">
    <location>
        <position position="88"/>
    </location>
</feature>
<feature type="active site" description="Proton acceptor" evidence="2">
    <location>
        <position position="349"/>
    </location>
</feature>
<feature type="active site" description="Proton acceptor" evidence="2">
    <location>
        <position position="378"/>
    </location>
</feature>
<accession>Q8CQN7</accession>
<comment type="catalytic activity">
    <reaction evidence="2">
        <text>2 acetyl-CoA = acetoacetyl-CoA + CoA</text>
        <dbReference type="Rhea" id="RHEA:21036"/>
        <dbReference type="ChEBI" id="CHEBI:57286"/>
        <dbReference type="ChEBI" id="CHEBI:57287"/>
        <dbReference type="ChEBI" id="CHEBI:57288"/>
        <dbReference type="EC" id="2.3.1.9"/>
    </reaction>
</comment>
<comment type="subcellular location">
    <subcellularLocation>
        <location evidence="1">Cytoplasm</location>
    </subcellularLocation>
</comment>
<comment type="similarity">
    <text evidence="3">Belongs to the thiolase-like superfamily. Thiolase family.</text>
</comment>